<feature type="signal peptide" evidence="2">
    <location>
        <begin position="1"/>
        <end position="18"/>
    </location>
</feature>
<feature type="chain" id="PRO_0000014926" description="Sodium channel regulatory subunit beta-1">
    <location>
        <begin position="19"/>
        <end position="218"/>
    </location>
</feature>
<feature type="topological domain" description="Extracellular" evidence="25">
    <location>
        <begin position="19"/>
        <end position="157"/>
    </location>
</feature>
<feature type="transmembrane region" description="Helical" evidence="25 29">
    <location>
        <begin position="158"/>
        <end position="179"/>
    </location>
</feature>
<feature type="topological domain" description="Cytoplasmic" evidence="25">
    <location>
        <begin position="180"/>
        <end position="218"/>
    </location>
</feature>
<feature type="domain" description="Ig-like C2-type">
    <location>
        <begin position="22"/>
        <end position="150"/>
    </location>
</feature>
<feature type="glycosylation site" description="N-linked (GlcNAc...) asparagine" evidence="16 18 30 31 32 33 36">
    <location>
        <position position="93"/>
    </location>
</feature>
<feature type="glycosylation site" description="N-linked (GlcNAc...) asparagine" evidence="15 16 18 29 30 31 32 33 36">
    <location>
        <position position="110"/>
    </location>
</feature>
<feature type="glycosylation site" description="N-linked (GlcNAc...) asparagine" evidence="15 16 18 29 30 31 32 33 36">
    <location>
        <position position="114"/>
    </location>
</feature>
<feature type="glycosylation site" description="N-linked (GlcNAc...) asparagine" evidence="16 18 19 30 31 32 33 36 37 38">
    <location>
        <position position="135"/>
    </location>
</feature>
<feature type="disulfide bond" evidence="15 16 17 19 29 30 31 32 33 34 35 36 37 38">
    <location>
        <begin position="21"/>
        <end position="43"/>
    </location>
</feature>
<feature type="disulfide bond" evidence="15 16 17 19 29 30 31 32 33 34 35 36 37 38">
    <location>
        <begin position="40"/>
        <end position="121"/>
    </location>
</feature>
<feature type="splice variant" id="VSP_041982" description="In isoform 2." evidence="23">
    <original>ANRDMASIVSEIMMYVLIVVLTIWLVAEMIYCYKKIAAATETAAQENASEYLAITSESKENCTGVQVAE</original>
    <variation>GESGAACPFTVTHRRARWRDRWQAVDRTGWLCAWPANRPQQRAEGEGSSPSCPLQLWPLFLSSPRRGQSMPVPHRRSGYRTQLCHLCCMTSGRCLLSLSQRVVLGLPGIIIRCVSRGVV</variation>
    <location>
        <begin position="150"/>
        <end position="218"/>
    </location>
</feature>
<feature type="sequence variant" id="VAR_062523" description="Found in a patient with idiopathic childhood epilepsy; likely pathogenic; de novo mutation; loss of function in increasing sodium channel activity; dbSNP:rs786205837." evidence="7 14">
    <original>D</original>
    <variation>N</variation>
    <location>
        <position position="25"/>
    </location>
</feature>
<feature type="sequence variant" id="VAR_070219" description="In ATFB13; the mutant results in highly reduced sodium currents and altered channel gating when coexpressed with SCN5A in a heterologous expression system; dbSNP:rs16969925." evidence="9">
    <original>R</original>
    <variation>H</variation>
    <location>
        <position position="85"/>
    </location>
</feature>
<feature type="sequence variant" id="VAR_062524" description="Found in a patient with non-specific cardiac conduction defects; likely pathogenic; dbSNP:rs121434627." evidence="6">
    <original>E</original>
    <variation>Q</variation>
    <location>
        <position position="87"/>
    </location>
</feature>
<feature type="sequence variant" id="VAR_078019" description="In DEE52; uncertain significance." evidence="12">
    <original>I</original>
    <variation>T</variation>
    <location>
        <position position="106"/>
    </location>
</feature>
<feature type="sequence variant" id="VAR_010165" description="In GEFSP1; can rescue the loss of function and defective trafficking to cell membrane phenotype of the SCN1A variant Thr-1852; dbSNP:rs104894718." evidence="5 22">
    <original>C</original>
    <variation>W</variation>
    <location>
        <position position="121"/>
    </location>
</feature>
<feature type="sequence variant" id="VAR_078020" description="In DEE52; severely decreased channel localization at the cell membrane; dbSNP:rs1135401736." evidence="8">
    <original>R</original>
    <variation>C</variation>
    <location>
        <position position="125"/>
    </location>
</feature>
<feature type="sequence variant" id="VAR_067341" description="In GEFSP1; dbSNP:rs759839781." evidence="10">
    <original>R</original>
    <variation>L</variation>
    <location>
        <position position="125"/>
    </location>
</feature>
<feature type="sequence variant" id="VAR_062525" description="In dbSNP:rs72558029." evidence="7">
    <original>V</original>
    <variation>I</variation>
    <location>
        <position position="138"/>
    </location>
</feature>
<feature type="sequence variant" id="VAR_070220" description="In ATFB13; the mutant results in reduced sodium currents when coexpressed with SCN5A in a heterologous expression system; dbSNP:rs72550247." evidence="9">
    <original>D</original>
    <variation>N</variation>
    <location>
        <position position="153"/>
    </location>
</feature>
<feature type="sequence variant" id="VAR_062526" description="In dbSNP:rs780958012." evidence="7">
    <original>K</original>
    <variation>I</variation>
    <location>
        <position position="208"/>
    </location>
</feature>
<feature type="sequence variant" id="VAR_062527" description="In dbSNP:rs150721582." evidence="7">
    <original>C</original>
    <variation>Y</variation>
    <location>
        <position position="211"/>
    </location>
</feature>
<feature type="sequence variant" id="VAR_062528" description="In dbSNP:rs201209882." evidence="7">
    <original>G</original>
    <variation>D</variation>
    <location>
        <position position="213"/>
    </location>
</feature>
<feature type="strand" evidence="41">
    <location>
        <begin position="29"/>
        <end position="31"/>
    </location>
</feature>
<feature type="strand" evidence="40">
    <location>
        <begin position="32"/>
        <end position="34"/>
    </location>
</feature>
<feature type="strand" evidence="41">
    <location>
        <begin position="36"/>
        <end position="38"/>
    </location>
</feature>
<feature type="strand" evidence="42">
    <location>
        <begin position="45"/>
        <end position="48"/>
    </location>
</feature>
<feature type="strand" evidence="41">
    <location>
        <begin position="51"/>
        <end position="61"/>
    </location>
</feature>
<feature type="strand" evidence="39">
    <location>
        <begin position="62"/>
        <end position="65"/>
    </location>
</feature>
<feature type="strand" evidence="41">
    <location>
        <begin position="68"/>
        <end position="74"/>
    </location>
</feature>
<feature type="strand" evidence="41">
    <location>
        <begin position="77"/>
        <end position="80"/>
    </location>
</feature>
<feature type="helix" evidence="41">
    <location>
        <begin position="84"/>
        <end position="86"/>
    </location>
</feature>
<feature type="turn" evidence="41">
    <location>
        <begin position="87"/>
        <end position="89"/>
    </location>
</feature>
<feature type="strand" evidence="41">
    <location>
        <begin position="90"/>
        <end position="92"/>
    </location>
</feature>
<feature type="strand" evidence="41">
    <location>
        <begin position="97"/>
        <end position="99"/>
    </location>
</feature>
<feature type="strand" evidence="41">
    <location>
        <begin position="106"/>
        <end position="110"/>
    </location>
</feature>
<feature type="helix" evidence="41">
    <location>
        <begin position="113"/>
        <end position="115"/>
    </location>
</feature>
<feature type="strand" evidence="41">
    <location>
        <begin position="117"/>
        <end position="128"/>
    </location>
</feature>
<feature type="strand" evidence="41">
    <location>
        <begin position="133"/>
        <end position="149"/>
    </location>
</feature>
<feature type="helix" evidence="41">
    <location>
        <begin position="154"/>
        <end position="191"/>
    </location>
</feature>
<reference key="1">
    <citation type="journal article" date="1993" name="Hum. Mol. Genet.">
        <title>The cloning and expression of a sodium channel beta 1-subunit cDNA from human brain.</title>
        <authorList>
            <person name="McClatchey A.I."/>
            <person name="Cannon S.C."/>
            <person name="Slaugenhaupt S.A."/>
            <person name="Gusella J.F."/>
        </authorList>
    </citation>
    <scope>NUCLEOTIDE SEQUENCE [MRNA] (ISOFORM 1)</scope>
    <scope>FUNCTION</scope>
    <scope>TISSUE SPECIFICITY</scope>
    <source>
        <tissue>Brain</tissue>
    </source>
</reference>
<reference key="2">
    <citation type="journal article" date="1994" name="J. Biol. Chem.">
        <title>Voltage-gated Na+ channel beta 1 subunit mRNA expressed in adult human skeletal muscle, heart, and brain is encoded by a single gene.</title>
        <authorList>
            <person name="Makita N."/>
            <person name="Bennett P.B. Jr."/>
            <person name="George A.L. Jr."/>
        </authorList>
    </citation>
    <scope>NUCLEOTIDE SEQUENCE [MRNA] (ISOFORM 1)</scope>
    <scope>FUNCTION</scope>
    <scope>SUBCELLULAR LOCATION</scope>
    <scope>TISSUE SPECIFICITY</scope>
    <source>
        <tissue>Heart</tissue>
        <tissue>Skeletal muscle</tissue>
    </source>
</reference>
<reference key="3">
    <citation type="journal article" date="1994" name="Genomics">
        <title>Genomic organization and chromosomal assignment of the human voltage-gated Na+ channel beta 1 subunit gene (SCN1B).</title>
        <authorList>
            <person name="Makita N."/>
            <person name="Sloan-Brown K."/>
            <person name="Weghuis D.O."/>
            <person name="Ropers H.-H."/>
            <person name="George A.L. Jr."/>
        </authorList>
    </citation>
    <scope>NUCLEOTIDE SEQUENCE [GENOMIC DNA]</scope>
    <source>
        <tissue>Placenta</tissue>
    </source>
</reference>
<reference key="4">
    <citation type="journal article" date="2003" name="Eur. J. Biochem.">
        <title>Molecular cloning and functional expression of the human sodium channel beta1B subunit, a novel splicing variant of the beta1 subunit.</title>
        <authorList>
            <person name="Qin N."/>
            <person name="D'Andrea M.R."/>
            <person name="Lubin M.L."/>
            <person name="Shafaee N."/>
            <person name="Codd E.E."/>
            <person name="Correa A.M."/>
        </authorList>
    </citation>
    <scope>NUCLEOTIDE SEQUENCE [MRNA] (ISOFORM 2)</scope>
    <scope>FUNCTION (ISOFORMS 1 AND 2)</scope>
    <scope>SUBCELLULAR LOCATION (ISOFORM 2)</scope>
    <scope>TISSUE SPECIFICITY</scope>
</reference>
<reference key="5">
    <citation type="journal article" date="2004" name="Nat. Genet.">
        <title>Complete sequencing and characterization of 21,243 full-length human cDNAs.</title>
        <authorList>
            <person name="Ota T."/>
            <person name="Suzuki Y."/>
            <person name="Nishikawa T."/>
            <person name="Otsuki T."/>
            <person name="Sugiyama T."/>
            <person name="Irie R."/>
            <person name="Wakamatsu A."/>
            <person name="Hayashi K."/>
            <person name="Sato H."/>
            <person name="Nagai K."/>
            <person name="Kimura K."/>
            <person name="Makita H."/>
            <person name="Sekine M."/>
            <person name="Obayashi M."/>
            <person name="Nishi T."/>
            <person name="Shibahara T."/>
            <person name="Tanaka T."/>
            <person name="Ishii S."/>
            <person name="Yamamoto J."/>
            <person name="Saito K."/>
            <person name="Kawai Y."/>
            <person name="Isono Y."/>
            <person name="Nakamura Y."/>
            <person name="Nagahari K."/>
            <person name="Murakami K."/>
            <person name="Yasuda T."/>
            <person name="Iwayanagi T."/>
            <person name="Wagatsuma M."/>
            <person name="Shiratori A."/>
            <person name="Sudo H."/>
            <person name="Hosoiri T."/>
            <person name="Kaku Y."/>
            <person name="Kodaira H."/>
            <person name="Kondo H."/>
            <person name="Sugawara M."/>
            <person name="Takahashi M."/>
            <person name="Kanda K."/>
            <person name="Yokoi T."/>
            <person name="Furuya T."/>
            <person name="Kikkawa E."/>
            <person name="Omura Y."/>
            <person name="Abe K."/>
            <person name="Kamihara K."/>
            <person name="Katsuta N."/>
            <person name="Sato K."/>
            <person name="Tanikawa M."/>
            <person name="Yamazaki M."/>
            <person name="Ninomiya K."/>
            <person name="Ishibashi T."/>
            <person name="Yamashita H."/>
            <person name="Murakawa K."/>
            <person name="Fujimori K."/>
            <person name="Tanai H."/>
            <person name="Kimata M."/>
            <person name="Watanabe M."/>
            <person name="Hiraoka S."/>
            <person name="Chiba Y."/>
            <person name="Ishida S."/>
            <person name="Ono Y."/>
            <person name="Takiguchi S."/>
            <person name="Watanabe S."/>
            <person name="Yosida M."/>
            <person name="Hotuta T."/>
            <person name="Kusano J."/>
            <person name="Kanehori K."/>
            <person name="Takahashi-Fujii A."/>
            <person name="Hara H."/>
            <person name="Tanase T.-O."/>
            <person name="Nomura Y."/>
            <person name="Togiya S."/>
            <person name="Komai F."/>
            <person name="Hara R."/>
            <person name="Takeuchi K."/>
            <person name="Arita M."/>
            <person name="Imose N."/>
            <person name="Musashino K."/>
            <person name="Yuuki H."/>
            <person name="Oshima A."/>
            <person name="Sasaki N."/>
            <person name="Aotsuka S."/>
            <person name="Yoshikawa Y."/>
            <person name="Matsunawa H."/>
            <person name="Ichihara T."/>
            <person name="Shiohata N."/>
            <person name="Sano S."/>
            <person name="Moriya S."/>
            <person name="Momiyama H."/>
            <person name="Satoh N."/>
            <person name="Takami S."/>
            <person name="Terashima Y."/>
            <person name="Suzuki O."/>
            <person name="Nakagawa S."/>
            <person name="Senoh A."/>
            <person name="Mizoguchi H."/>
            <person name="Goto Y."/>
            <person name="Shimizu F."/>
            <person name="Wakebe H."/>
            <person name="Hishigaki H."/>
            <person name="Watanabe T."/>
            <person name="Sugiyama A."/>
            <person name="Takemoto M."/>
            <person name="Kawakami B."/>
            <person name="Yamazaki M."/>
            <person name="Watanabe K."/>
            <person name="Kumagai A."/>
            <person name="Itakura S."/>
            <person name="Fukuzumi Y."/>
            <person name="Fujimori Y."/>
            <person name="Komiyama M."/>
            <person name="Tashiro H."/>
            <person name="Tanigami A."/>
            <person name="Fujiwara T."/>
            <person name="Ono T."/>
            <person name="Yamada K."/>
            <person name="Fujii Y."/>
            <person name="Ozaki K."/>
            <person name="Hirao M."/>
            <person name="Ohmori Y."/>
            <person name="Kawabata A."/>
            <person name="Hikiji T."/>
            <person name="Kobatake N."/>
            <person name="Inagaki H."/>
            <person name="Ikema Y."/>
            <person name="Okamoto S."/>
            <person name="Okitani R."/>
            <person name="Kawakami T."/>
            <person name="Noguchi S."/>
            <person name="Itoh T."/>
            <person name="Shigeta K."/>
            <person name="Senba T."/>
            <person name="Matsumura K."/>
            <person name="Nakajima Y."/>
            <person name="Mizuno T."/>
            <person name="Morinaga M."/>
            <person name="Sasaki M."/>
            <person name="Togashi T."/>
            <person name="Oyama M."/>
            <person name="Hata H."/>
            <person name="Watanabe M."/>
            <person name="Komatsu T."/>
            <person name="Mizushima-Sugano J."/>
            <person name="Satoh T."/>
            <person name="Shirai Y."/>
            <person name="Takahashi Y."/>
            <person name="Nakagawa K."/>
            <person name="Okumura K."/>
            <person name="Nagase T."/>
            <person name="Nomura N."/>
            <person name="Kikuchi H."/>
            <person name="Masuho Y."/>
            <person name="Yamashita R."/>
            <person name="Nakai K."/>
            <person name="Yada T."/>
            <person name="Nakamura Y."/>
            <person name="Ohara O."/>
            <person name="Isogai T."/>
            <person name="Sugano S."/>
        </authorList>
    </citation>
    <scope>NUCLEOTIDE SEQUENCE [LARGE SCALE MRNA] (ISOFORM 1)</scope>
    <source>
        <tissue>Skeletal muscle</tissue>
    </source>
</reference>
<reference key="6">
    <citation type="submission" date="2004-10" db="EMBL/GenBank/DDBJ databases">
        <title>Cloning of human full-length CDSs in BD Creator(TM) system donor vector.</title>
        <authorList>
            <person name="Kalnine N."/>
            <person name="Chen X."/>
            <person name="Rolfs A."/>
            <person name="Halleck A."/>
            <person name="Hines L."/>
            <person name="Eisenstein S."/>
            <person name="Koundinya M."/>
            <person name="Raphael J."/>
            <person name="Moreira D."/>
            <person name="Kelley T."/>
            <person name="LaBaer J."/>
            <person name="Lin Y."/>
            <person name="Phelan M."/>
            <person name="Farmer A."/>
        </authorList>
    </citation>
    <scope>NUCLEOTIDE SEQUENCE [LARGE SCALE MRNA] (ISOFORM 1)</scope>
</reference>
<reference key="7">
    <citation type="journal article" date="2004" name="Nature">
        <title>The DNA sequence and biology of human chromosome 19.</title>
        <authorList>
            <person name="Grimwood J."/>
            <person name="Gordon L.A."/>
            <person name="Olsen A.S."/>
            <person name="Terry A."/>
            <person name="Schmutz J."/>
            <person name="Lamerdin J.E."/>
            <person name="Hellsten U."/>
            <person name="Goodstein D."/>
            <person name="Couronne O."/>
            <person name="Tran-Gyamfi M."/>
            <person name="Aerts A."/>
            <person name="Altherr M."/>
            <person name="Ashworth L."/>
            <person name="Bajorek E."/>
            <person name="Black S."/>
            <person name="Branscomb E."/>
            <person name="Caenepeel S."/>
            <person name="Carrano A.V."/>
            <person name="Caoile C."/>
            <person name="Chan Y.M."/>
            <person name="Christensen M."/>
            <person name="Cleland C.A."/>
            <person name="Copeland A."/>
            <person name="Dalin E."/>
            <person name="Dehal P."/>
            <person name="Denys M."/>
            <person name="Detter J.C."/>
            <person name="Escobar J."/>
            <person name="Flowers D."/>
            <person name="Fotopulos D."/>
            <person name="Garcia C."/>
            <person name="Georgescu A.M."/>
            <person name="Glavina T."/>
            <person name="Gomez M."/>
            <person name="Gonzales E."/>
            <person name="Groza M."/>
            <person name="Hammon N."/>
            <person name="Hawkins T."/>
            <person name="Haydu L."/>
            <person name="Ho I."/>
            <person name="Huang W."/>
            <person name="Israni S."/>
            <person name="Jett J."/>
            <person name="Kadner K."/>
            <person name="Kimball H."/>
            <person name="Kobayashi A."/>
            <person name="Larionov V."/>
            <person name="Leem S.-H."/>
            <person name="Lopez F."/>
            <person name="Lou Y."/>
            <person name="Lowry S."/>
            <person name="Malfatti S."/>
            <person name="Martinez D."/>
            <person name="McCready P.M."/>
            <person name="Medina C."/>
            <person name="Morgan J."/>
            <person name="Nelson K."/>
            <person name="Nolan M."/>
            <person name="Ovcharenko I."/>
            <person name="Pitluck S."/>
            <person name="Pollard M."/>
            <person name="Popkie A.P."/>
            <person name="Predki P."/>
            <person name="Quan G."/>
            <person name="Ramirez L."/>
            <person name="Rash S."/>
            <person name="Retterer J."/>
            <person name="Rodriguez A."/>
            <person name="Rogers S."/>
            <person name="Salamov A."/>
            <person name="Salazar A."/>
            <person name="She X."/>
            <person name="Smith D."/>
            <person name="Slezak T."/>
            <person name="Solovyev V."/>
            <person name="Thayer N."/>
            <person name="Tice H."/>
            <person name="Tsai M."/>
            <person name="Ustaszewska A."/>
            <person name="Vo N."/>
            <person name="Wagner M."/>
            <person name="Wheeler J."/>
            <person name="Wu K."/>
            <person name="Xie G."/>
            <person name="Yang J."/>
            <person name="Dubchak I."/>
            <person name="Furey T.S."/>
            <person name="DeJong P."/>
            <person name="Dickson M."/>
            <person name="Gordon D."/>
            <person name="Eichler E.E."/>
            <person name="Pennacchio L.A."/>
            <person name="Richardson P."/>
            <person name="Stubbs L."/>
            <person name="Rokhsar D.S."/>
            <person name="Myers R.M."/>
            <person name="Rubin E.M."/>
            <person name="Lucas S.M."/>
        </authorList>
    </citation>
    <scope>NUCLEOTIDE SEQUENCE [LARGE SCALE GENOMIC DNA]</scope>
</reference>
<reference key="8">
    <citation type="submission" date="2006-06" db="EMBL/GenBank/DDBJ databases">
        <authorList>
            <consortium name="NHLBI resequencing and genotyping service (RS&amp;G)"/>
        </authorList>
    </citation>
    <scope>NUCLEOTIDE SEQUENCE [GENOMIC DNA]</scope>
</reference>
<reference key="9">
    <citation type="journal article" date="2004" name="Genome Res.">
        <title>The status, quality, and expansion of the NIH full-length cDNA project: the Mammalian Gene Collection (MGC).</title>
        <authorList>
            <consortium name="The MGC Project Team"/>
        </authorList>
    </citation>
    <scope>NUCLEOTIDE SEQUENCE [LARGE SCALE MRNA] (ISOFORM 1)</scope>
    <source>
        <tissue>Brain</tissue>
    </source>
</reference>
<reference key="10">
    <citation type="journal article" date="2004" name="J. Neurosci.">
        <title>A novel epilepsy mutation in the sodium channel SCN1A identifies a cytoplasmic domain for beta subunit interaction.</title>
        <authorList>
            <person name="Spampanato J."/>
            <person name="Kearney J.A."/>
            <person name="de Haan G."/>
            <person name="McEwen D.P."/>
            <person name="Escayg A."/>
            <person name="Aradi I."/>
            <person name="MacDonald B.T."/>
            <person name="Levin S.I."/>
            <person name="Soltesz I."/>
            <person name="Benna P."/>
            <person name="Montalenti E."/>
            <person name="Isom L.L."/>
            <person name="Goldin A.L."/>
            <person name="Meisler M.H."/>
        </authorList>
    </citation>
    <scope>INTERACTION WITH SCN1A</scope>
    <scope>FUNCTION</scope>
</reference>
<reference key="11">
    <citation type="journal article" date="2008" name="J. Clin. Invest.">
        <title>Sodium channel beta1 subunit mutations associated with Brugada syndrome and cardiac conduction disease in humans.</title>
        <authorList>
            <person name="Watanabe H."/>
            <person name="Koopmann T.T."/>
            <person name="Le Scouarnec S."/>
            <person name="Yang T."/>
            <person name="Ingram C.R."/>
            <person name="Schott J.J."/>
            <person name="Demolombe S."/>
            <person name="Probst V."/>
            <person name="Anselme F."/>
            <person name="Escande D."/>
            <person name="Wiesfeld A.C."/>
            <person name="Pfeufer A."/>
            <person name="Kaab S."/>
            <person name="Wichmann H.E."/>
            <person name="Hasdemir C."/>
            <person name="Aizawa Y."/>
            <person name="Wilde A.A."/>
            <person name="Roden D.M."/>
            <person name="Bezzina C.R."/>
        </authorList>
    </citation>
    <scope>INVOLVEMENT IN BRGDA5</scope>
    <scope>VARIANT GLN-87</scope>
    <scope>FUNCTION</scope>
</reference>
<reference key="12">
    <citation type="journal article" date="2009" name="J. Neurosci.">
        <title>A functional null mutation of SCN1B in a patient with Dravet syndrome.</title>
        <authorList>
            <person name="Patino G.A."/>
            <person name="Claes L.R."/>
            <person name="Lopez-Santiago L.F."/>
            <person name="Slat E.A."/>
            <person name="Dondeti R.S."/>
            <person name="Chen C."/>
            <person name="O'Malley H.A."/>
            <person name="Gray C.B."/>
            <person name="Miyazaki H."/>
            <person name="Nukina N."/>
            <person name="Oyama F."/>
            <person name="De Jonghe P."/>
            <person name="Isom L.L."/>
        </authorList>
    </citation>
    <scope>FUNCTION</scope>
    <scope>SUBCELLULAR LOCATION</scope>
    <scope>INVOLVEMENT IN DEE52</scope>
    <scope>VARIANT DEE52 CYS-125</scope>
    <scope>CHARACTERIZATION OF VARIANT DEE52 CYS-125</scope>
</reference>
<reference key="13">
    <citation type="journal article" date="2011" name="J. Neurosci.">
        <title>Voltage-gated Na+ channel beta1B: a secreted cell adhesion molecule involved in human epilepsy.</title>
        <authorList>
            <person name="Patino G.A."/>
            <person name="Brackenbury W.J."/>
            <person name="Bao Y."/>
            <person name="Lopez-Santiago L.F."/>
            <person name="O'Malley H.A."/>
            <person name="Chen C."/>
            <person name="Calhoun J.D."/>
            <person name="Lafreniere R.G."/>
            <person name="Cossette P."/>
            <person name="Rouleau G.A."/>
            <person name="Isom L.L."/>
        </authorList>
    </citation>
    <scope>FUNCTION (ISOFORM 2)</scope>
    <scope>SUBCELLULAR LOCATION (ISOFORMS 1 AND 2)</scope>
    <scope>INTERACTION WITH SCN1A; SCN3A AND SCN5A (ISOFORM 1)</scope>
</reference>
<reference key="14">
    <citation type="journal article" date="2016" name="Ann. Clin. Transl. Neurol.">
        <title>Pathogenic mechanism of recurrent mutations of SCN8A in epileptic encephalopathy.</title>
        <authorList>
            <person name="Wagnon J.L."/>
            <person name="Barker B.S."/>
            <person name="Hounshell J.A."/>
            <person name="Haaxma C.A."/>
            <person name="Shealy A."/>
            <person name="Moss T."/>
            <person name="Parikh S."/>
            <person name="Messer R.D."/>
            <person name="Patel M.K."/>
            <person name="Meisler M.H."/>
        </authorList>
    </citation>
    <scope>INTERACTION WITH SCN8A</scope>
</reference>
<reference key="15">
    <citation type="journal article" date="2018" name="Hum. Mutat.">
        <title>A mutation of SCN1B associated with GEFS+ causes functional and maturation defects of the voltage-dependent sodium channel.</title>
        <authorList>
            <person name="Baroni D."/>
            <person name="Picco C."/>
            <person name="Moran O."/>
        </authorList>
    </citation>
    <scope>FUNCTION</scope>
    <scope>SUBCELLULAR LOCATION</scope>
    <scope>CHARACTERIZATION OF VARIANT ASN-25</scope>
</reference>
<reference evidence="29" key="16">
    <citation type="journal article" date="2018" name="Science">
        <title>Structure of the human voltage-gated sodium channel Nav1.4 in complex with beta1.</title>
        <authorList>
            <person name="Pan X."/>
            <person name="Li Z."/>
            <person name="Zhou Q."/>
            <person name="Shen H."/>
            <person name="Wu K."/>
            <person name="Huang X."/>
            <person name="Chen J."/>
            <person name="Zhang J."/>
            <person name="Zhu X."/>
            <person name="Lei J."/>
            <person name="Xiong W."/>
            <person name="Gong H."/>
            <person name="Xiao B."/>
            <person name="Yan N."/>
        </authorList>
    </citation>
    <scope>STRUCTURE BY ELECTRON MICROSCOPY (3.20 ANGSTROMS) IN COMPLEX WITH SCN4A</scope>
    <scope>SUBCELLULAR LOCATION</scope>
    <scope>TOPOLOGY</scope>
    <scope>GLYCOSYLATION AT ASN-110 AND ASN-114</scope>
    <scope>DISULFIDE BONDS</scope>
</reference>
<reference key="17">
    <citation type="journal article" date="2019" name="Science">
        <title>Structures of human Nav1.7 channel in complex with auxiliary subunits and animal toxins.</title>
        <authorList>
            <person name="Shen H."/>
            <person name="Liu D."/>
            <person name="Wu K."/>
            <person name="Lei J."/>
            <person name="Yan N."/>
        </authorList>
    </citation>
    <scope>STRUCTURE BY ELECTRON MICROSCOPY (3.2 ANGSTROMS) IN COMPLEX WITH SCN9A; SCN2B; PROTOTOXIN-II; TETRODOTOXIN; HUWENTOXIN-IV AND SAXITOXIN</scope>
    <scope>FUNCTION</scope>
    <scope>GLYCOSYLATION AT ASN-93; ASN-110; ASN-114 AND ASN-135</scope>
    <scope>DISULFIDE BOND</scope>
</reference>
<reference evidence="34 35" key="18">
    <citation type="journal article" date="2022" name="Nat. Commun.">
        <title>Structural basis for modulation of human NaV1.3 by clinical drug and selective antagonist.</title>
        <authorList>
            <person name="Li X."/>
            <person name="Xu F."/>
            <person name="Xu H."/>
            <person name="Zhang S."/>
            <person name="Gao Y."/>
            <person name="Zhang H."/>
            <person name="Dong Y."/>
            <person name="Zheng Y."/>
            <person name="Yang B."/>
            <person name="Sun J."/>
            <person name="Zhang X.C."/>
            <person name="Zhao Y."/>
            <person name="Jiang D."/>
        </authorList>
    </citation>
    <scope>STRUCTURE BY ELECTRON MICROSCOPY (3.30 ANGSTROMS)</scope>
    <scope>SUBUNIT</scope>
    <scope>DISULFIDE BONDS</scope>
</reference>
<reference evidence="37 38" key="19">
    <citation type="journal article" date="2023" name="Nat. Commun.">
        <title>Structure of human NaV1.6 channel reveals Na+ selectivity and pore blockade by 4,9-anhydro-tetrodotoxin.</title>
        <authorList>
            <person name="Li Y."/>
            <person name="Yuan T."/>
            <person name="Huang B."/>
            <person name="Zhou F."/>
            <person name="Peng C."/>
            <person name="Li X."/>
            <person name="Qiu Y."/>
            <person name="Yang B."/>
            <person name="Zhao Y."/>
            <person name="Huang Z."/>
            <person name="Jiang D."/>
        </authorList>
    </citation>
    <scope>STRUCTURE BY ELECTRON MICROSCOPY (3.30 ANGSTROMS) IN COMPLEX WITH SCN8A; SCN2B; NA(+) AND INHIBITOR 4,9-ANHYDRO-TETRODOTOXIN</scope>
    <scope>SUBUNIT</scope>
    <scope>GLYCOSYLATION AT ASN-135</scope>
    <scope>DISULFIDE BONDS</scope>
</reference>
<reference evidence="36" key="20">
    <citation type="journal article" date="2023" name="Proc. Natl. Acad. Sci. U.S.A.">
        <title>Cryo-EM structure of human voltage-gated sodium channel Nav1.6.</title>
        <authorList>
            <person name="Fan X."/>
            <person name="Huang J."/>
            <person name="Jin X."/>
            <person name="Yan N."/>
        </authorList>
    </citation>
    <scope>STRUCTURE BY ELECTRON MICROSCOPY (3.10 ANGSTROMS) IN COMPLEX WITH SCN8A</scope>
    <scope>FUNCTION</scope>
    <scope>SUBUNIT</scope>
    <scope>GLYCOSYLATION AT ASN-93; ASN-110; ASN-114 AND ASN-135</scope>
</reference>
<reference key="21">
    <citation type="journal article" date="1998" name="Nat. Genet.">
        <title>Febrile seizures and generalized epilepsy associated with a mutation in the Na(+)-channel beta-1 subunit gene SCN1B.</title>
        <authorList>
            <person name="Wallace R.H."/>
            <person name="Wang D.W."/>
            <person name="Singh R."/>
            <person name="Scheffer I.E."/>
            <person name="George A.L. Jr."/>
            <person name="Phillips H.A."/>
            <person name="Saar K."/>
            <person name="Reis A."/>
            <person name="Johnson E.W."/>
            <person name="Sutherland G.R."/>
            <person name="Berkovic S.F."/>
            <person name="Mulley J.C."/>
        </authorList>
    </citation>
    <scope>VARIANT GEFSP1 TRP-121</scope>
</reference>
<reference key="22">
    <citation type="journal article" date="2007" name="J. Neurosci.">
        <title>Modulatory proteins can rescue a trafficking defective epileptogenic Nav1.1 Na+ channel mutant.</title>
        <authorList>
            <person name="Rusconi R."/>
            <person name="Scalmani P."/>
            <person name="Cassulini R.R."/>
            <person name="Giunti G."/>
            <person name="Gambardella A."/>
            <person name="Franceschetti S."/>
            <person name="Annesi G."/>
            <person name="Wanke E."/>
            <person name="Mantegazza M."/>
        </authorList>
    </citation>
    <scope>CHARACTERIZATION OF VARIANT GEFSP1 TRP-121</scope>
    <scope>INTERACTION WITH SCN1A</scope>
    <scope>SUBCELLULAR LOCATION</scope>
</reference>
<reference key="23">
    <citation type="journal article" date="2009" name="Circ. Arrhythm. Electrophysiol.">
        <title>Mutations in sodium channel beta1- and beta2-subunits associated with atrial fibrillation.</title>
        <authorList>
            <person name="Watanabe H."/>
            <person name="Darbar D."/>
            <person name="Kaiser D.W."/>
            <person name="Jiramongkolchai K."/>
            <person name="Chopra S."/>
            <person name="Donahue B.S."/>
            <person name="Kannankeril P.J."/>
            <person name="Roden D.M."/>
        </authorList>
    </citation>
    <scope>VARIANTS ATFB13 HIS-85 AND ASN-153</scope>
    <scope>CHARACTERIZATION OF VARIANTS ATFB13 HIS-85 AND ASN-153</scope>
</reference>
<reference key="24">
    <citation type="journal article" date="2009" name="Clin. Genet.">
        <title>Mutational analysis of the SCN1A, SCN1B and GABRG2 genes in 150 Italian patients with idiopathic childhood epilepsies.</title>
        <authorList>
            <person name="Orrico A."/>
            <person name="Galli L."/>
            <person name="Grosso S."/>
            <person name="Buoni S."/>
            <person name="Pianigiani R."/>
            <person name="Balestri P."/>
            <person name="Sorrentino V."/>
        </authorList>
    </citation>
    <scope>VARIANTS ASN-25; ILE-138; ILE-208; TYR-211 AND ASP-213</scope>
</reference>
<reference key="25">
    <citation type="journal article" date="2011" name="Eur. J. Neurol.">
        <title>New mutation c.374C&gt;T and a putative disease-associated haplotype within SCN1B gene in Tunisian families with febrile seizures.</title>
        <authorList>
            <person name="Fendri-Kriaa N."/>
            <person name="Kammoun F."/>
            <person name="Salem I.H."/>
            <person name="Kifagi C."/>
            <person name="Mkaouar-Rebai E."/>
            <person name="Hsairi I."/>
            <person name="Rebai A."/>
            <person name="Triki C."/>
            <person name="Fakhfakh F."/>
        </authorList>
    </citation>
    <scope>VARIANT GEFSP1 LEU-125</scope>
</reference>
<reference key="26">
    <citation type="journal article" date="2012" name="Epilepsia">
        <title>A homozygous mutation of voltage-gated sodium channel beta(I) gene SCN1B in a patient with Dravet syndrome.</title>
        <authorList>
            <person name="Ogiwara I."/>
            <person name="Nakayama T."/>
            <person name="Yamagata T."/>
            <person name="Ohtani H."/>
            <person name="Mazaki E."/>
            <person name="Tsuchiya S."/>
            <person name="Inoue Y."/>
            <person name="Yamakawa K."/>
        </authorList>
    </citation>
    <scope>VARIANT DEE52 THR-106</scope>
</reference>
<sequence>MGRLLALVVGAALVSSACGGCVEVDSETEAVYGMTFKILCISCKRRSETNAETFTEWTFRQKGTEEFVKILRYENEVLQLEEDERFEGRVVWNGSRGTKDLQDLSIFITNVTYNHSGDYECHVYRLLFFENYEHNTSVVKKIHIEVVDKANRDMASIVSEIMMYVLIVVLTIWLVAEMIYCYKKIAAATETAAQENASEYLAITSESKENCTGVQVAE</sequence>
<accession>Q07699</accession>
<accession>Q5TZZ4</accession>
<accession>Q6TN97</accession>
<protein>
    <recommendedName>
        <fullName evidence="27">Sodium channel regulatory subunit beta-1</fullName>
    </recommendedName>
</protein>
<evidence type="ECO:0000250" key="1">
    <source>
        <dbReference type="UniProtKB" id="P97952"/>
    </source>
</evidence>
<evidence type="ECO:0000250" key="2">
    <source>
        <dbReference type="UniProtKB" id="Q00954"/>
    </source>
</evidence>
<evidence type="ECO:0000269" key="3">
    <source>
    </source>
</evidence>
<evidence type="ECO:0000269" key="4">
    <source>
    </source>
</evidence>
<evidence type="ECO:0000269" key="5">
    <source>
    </source>
</evidence>
<evidence type="ECO:0000269" key="6">
    <source>
    </source>
</evidence>
<evidence type="ECO:0000269" key="7">
    <source>
    </source>
</evidence>
<evidence type="ECO:0000269" key="8">
    <source>
    </source>
</evidence>
<evidence type="ECO:0000269" key="9">
    <source>
    </source>
</evidence>
<evidence type="ECO:0000269" key="10">
    <source>
    </source>
</evidence>
<evidence type="ECO:0000269" key="11">
    <source>
    </source>
</evidence>
<evidence type="ECO:0000269" key="12">
    <source>
    </source>
</evidence>
<evidence type="ECO:0000269" key="13">
    <source>
    </source>
</evidence>
<evidence type="ECO:0000269" key="14">
    <source>
    </source>
</evidence>
<evidence type="ECO:0000269" key="15">
    <source>
    </source>
</evidence>
<evidence type="ECO:0000269" key="16">
    <source>
    </source>
</evidence>
<evidence type="ECO:0000269" key="17">
    <source>
    </source>
</evidence>
<evidence type="ECO:0000269" key="18">
    <source>
    </source>
</evidence>
<evidence type="ECO:0000269" key="19">
    <source>
    </source>
</evidence>
<evidence type="ECO:0000269" key="20">
    <source>
    </source>
</evidence>
<evidence type="ECO:0000269" key="21">
    <source>
    </source>
</evidence>
<evidence type="ECO:0000269" key="22">
    <source>
    </source>
</evidence>
<evidence type="ECO:0000303" key="23">
    <source>
    </source>
</evidence>
<evidence type="ECO:0000305" key="24"/>
<evidence type="ECO:0000305" key="25">
    <source>
    </source>
</evidence>
<evidence type="ECO:0000305" key="26">
    <source>
    </source>
</evidence>
<evidence type="ECO:0000305" key="27">
    <source>
    </source>
</evidence>
<evidence type="ECO:0000312" key="28">
    <source>
        <dbReference type="HGNC" id="HGNC:10586"/>
    </source>
</evidence>
<evidence type="ECO:0007744" key="29">
    <source>
        <dbReference type="PDB" id="6AGF"/>
    </source>
</evidence>
<evidence type="ECO:0007744" key="30">
    <source>
        <dbReference type="PDB" id="6J8G"/>
    </source>
</evidence>
<evidence type="ECO:0007744" key="31">
    <source>
        <dbReference type="PDB" id="6J8H"/>
    </source>
</evidence>
<evidence type="ECO:0007744" key="32">
    <source>
        <dbReference type="PDB" id="6J8I"/>
    </source>
</evidence>
<evidence type="ECO:0007744" key="33">
    <source>
        <dbReference type="PDB" id="6J8J"/>
    </source>
</evidence>
<evidence type="ECO:0007744" key="34">
    <source>
        <dbReference type="PDB" id="7W77"/>
    </source>
</evidence>
<evidence type="ECO:0007744" key="35">
    <source>
        <dbReference type="PDB" id="7W7F"/>
    </source>
</evidence>
<evidence type="ECO:0007744" key="36">
    <source>
        <dbReference type="PDB" id="8FHD"/>
    </source>
</evidence>
<evidence type="ECO:0007744" key="37">
    <source>
        <dbReference type="PDB" id="8GZ1"/>
    </source>
</evidence>
<evidence type="ECO:0007744" key="38">
    <source>
        <dbReference type="PDB" id="8GZ2"/>
    </source>
</evidence>
<evidence type="ECO:0007829" key="39">
    <source>
        <dbReference type="PDB" id="6AGF"/>
    </source>
</evidence>
<evidence type="ECO:0007829" key="40">
    <source>
        <dbReference type="PDB" id="7W7F"/>
    </source>
</evidence>
<evidence type="ECO:0007829" key="41">
    <source>
        <dbReference type="PDB" id="7W9K"/>
    </source>
</evidence>
<evidence type="ECO:0007829" key="42">
    <source>
        <dbReference type="PDB" id="8GZ2"/>
    </source>
</evidence>
<comment type="function">
    <text evidence="3 4 6 8 14 16 18 20 21">Regulatory subunit of multiple voltage-gated sodium (Nav) channels directly mediating the depolarization of excitable membranes. Navs, also called VGSCs (voltage-gated sodium channels) or VDSCs (voltage-dependent sodium channels), operate by switching between closed and open conformations depending on the voltage difference across the membrane. In the open conformation they allow Na(+) ions to selectively pass through the pore, along their electrochemical gradient. The influx of Na+ ions provokes membrane depolarization, initiating the propagation of electrical signals throughout cells and tissues (PubMed:14622265, PubMed:15525788, PubMed:18464934, PubMed:19710327, PubMed:29992740, PubMed:36696443, PubMed:8125980, PubMed:8394762). The accessory beta subunits participate in localization and functional modulation of the Nav channels (PubMed:15525788, PubMed:19710327, PubMed:29992740). Modulates the activity of SCN1A/Nav1.1, SCN2A/Nav1.2, SCN3A/Nav1.3, SCN4A/Nav1.4, SCN5A/Nav1.5, SCN8A/Nav1.6, SCN9A/Nav1.7 and SCN10A/Nav1.8 (PubMed:14622265, PubMed:15525788, PubMed:18464934, PubMed:30765606, PubMed:36696443, PubMed:8125980, PubMed:8394762).</text>
</comment>
<comment type="function">
    <molecule>Isoform 2</molecule>
    <text evidence="3 11">Cell adhesion molecule that plays a critical role in neuronal migration and pathfinding during brain development. Stimulates neurite outgrowth (PubMed:21994374). Has no regulatory function on the SCN2A sodium channel complex (PubMed:14622265).</text>
</comment>
<comment type="subunit">
    <text evidence="1 2 4 5 11 13 15 18 19 20">Voltage-gated sodium (Nav) channel consists of an ion-conducting pore-forming alpha subunit functional on its own that is regulated by one or more beta subunits (PubMed:15525788, PubMed:21994374, PubMed:30190309, PubMed:36696443, PubMed:36823201). Interacts with SCN1A; regulatory subunit of SCN1A/Nav1.1 (PubMed:15525788, PubMed:17928445, PubMed:21994374). Interacts with SCN3A; regulatory subunit of SCN3A/Nav1.3 (PubMed:21994374). Interacts with SCN4A; regulatory subunit of SCN4A/Nav1.4 (PubMed:30190309). Interacts with SCN5A; regulatory subunit of SCN5A/Nav1.5 (PubMed:21994374). Interacts with SCN8A; regulatory subunit of SCN8A/Nav1.6 (PubMed:26900580, PubMed:36696443, PubMed:36823201). Interacts with SCN9A; regulatory subunit of SCN9A/Nav1.7 (PubMed:21994374). Interacts with SCN10A; regulatory subunit of SCN10A/Nav1.8 (By similarity). Interacts with NFASC (By similarity). Interacts with TMEM65 (By similarity).</text>
</comment>
<comment type="interaction">
    <interactant intactId="EBI-20974499">
        <id>Q07699-1</id>
    </interactant>
    <interactant intactId="EBI-16813249">
        <id>P35499</id>
        <label>SCN4A</label>
    </interactant>
    <organismsDiffer>false</organismsDiffer>
    <experiments>2</experiments>
</comment>
<comment type="subcellular location">
    <molecule>Isoform 1</molecule>
    <subcellularLocation>
        <location evidence="5 8 11 14 15 26">Cell membrane</location>
        <topology evidence="15 26">Single-pass type I membrane protein</topology>
    </subcellularLocation>
    <subcellularLocation>
        <location evidence="1">Perikaryon</location>
    </subcellularLocation>
    <subcellularLocation>
        <location evidence="1">Cell projection</location>
    </subcellularLocation>
    <subcellularLocation>
        <location evidence="2">Cell projection</location>
        <location evidence="2">Axon</location>
    </subcellularLocation>
    <text evidence="2">Detected at nodes of Ranvier on the sciatic nerve.</text>
</comment>
<comment type="subcellular location">
    <molecule>Isoform 2</molecule>
    <subcellularLocation>
        <location evidence="3">Perikaryon</location>
    </subcellularLocation>
    <subcellularLocation>
        <location evidence="3">Cell projection</location>
    </subcellularLocation>
    <subcellularLocation>
        <location evidence="11">Secreted</location>
    </subcellularLocation>
    <text evidence="3">Detected on Purkinje cells and their cell projections and on neuronal cell projections.</text>
</comment>
<comment type="alternative products">
    <event type="alternative splicing"/>
    <isoform>
        <id>Q07699-1</id>
        <name>1</name>
        <name>Beta-1</name>
        <sequence type="displayed"/>
    </isoform>
    <isoform>
        <id>Q07699-2</id>
        <name>2</name>
        <name>Beta-1B</name>
        <name>beta1A</name>
        <name>beta1B</name>
        <sequence type="described" ref="VSP_041982"/>
    </isoform>
</comment>
<comment type="tissue specificity">
    <text evidence="3 20 21">The overall expression of isoform 1 and isoform 2 is very similar. Isoform 1 is abundantly expressed in skeletal muscle, heart and brain. Isoform 2 is highly expressed in brain and skeletal muscle and present at a very low level in heart, placenta, lung, liver, kidney and pancreas. In brain, isoform 2 is most abundant in the cerebellum, followed by the cerebral cortex and occipital lobe, while isoform 1 levels are higher in the cortex compared to the cerebellum. Isoform 2 is expressed in many regions of the brain, including cerebellar Purkinje cells, cortex pyramidal neurons and many of the neuronal fibers throughout the brain (at protein level). Also detected in dorsal root ganglion, in fibers of the spinal nerve and in cortical neurons and their processes (at protein level).</text>
</comment>
<comment type="disease" evidence="5 10 22">
    <disease id="DI-00505">
        <name>Generalized epilepsy with febrile seizures plus 1</name>
        <acronym>GEFSP1</acronym>
        <description>A rare autosomal dominant, familial condition with incomplete penetrance and large intrafamilial variability. Patients display febrile seizures persisting sometimes beyond the age of 6 years and/or a variety of afebrile seizure types. This disease combines febrile seizures, generalized seizures often precipitated by fever at age 6 years or more, and partial seizures, with a variable degree of severity.</description>
        <dbReference type="MIM" id="604233"/>
    </disease>
    <text>The disease is caused by variants affecting the gene represented in this entry.</text>
</comment>
<comment type="disease" evidence="6">
    <disease id="DI-02502">
        <name>Brugada syndrome 5</name>
        <acronym>BRGDA5</acronym>
        <description>A tachyarrhythmia characterized by right bundle branch block and ST segment elevation on an electrocardiogram (ECG). It can cause the ventricles to beat so fast that the blood is prevented from circulating efficiently in the body. When this situation occurs, the individual will faint and may die in a few minutes if the heart is not reset.</description>
        <dbReference type="MIM" id="612838"/>
    </disease>
    <text>The gene represented in this entry may be involved in disease pathogenesis.</text>
</comment>
<comment type="disease" evidence="9">
    <disease id="DI-03855">
        <name>Atrial fibrillation, familial, 13</name>
        <acronym>ATFB13</acronym>
        <description>A familial form of atrial fibrillation, a common sustained cardiac rhythm disturbance. Atrial fibrillation is characterized by disorganized atrial electrical activity and ineffective atrial contraction promoting blood stasis in the atria and reduces ventricular filling. It can result in palpitations, syncope, thromboembolic stroke, and congestive heart failure.</description>
        <dbReference type="MIM" id="615377"/>
    </disease>
    <text>The disease is caused by variants affecting the gene represented in this entry.</text>
</comment>
<comment type="disease" evidence="8 12">
    <disease id="DI-04944">
        <name>Developmental and epileptic encephalopathy 52</name>
        <acronym>DEE52</acronym>
        <description>A form of epileptic encephalopathy, a heterogeneous group of severe early-onset epilepsies characterized by refractory seizures, neurodevelopmental impairment, and poor prognosis. Development is normal prior to seizure onset, after which cognitive and motor delays become apparent. DEE52 inheritance is autosomal recessive.</description>
        <dbReference type="MIM" id="617350"/>
    </disease>
    <text>The disease is caused by variants affecting the gene represented in this entry.</text>
</comment>
<comment type="miscellaneous">
    <molecule>Isoform 2</molecule>
    <text evidence="24">Due to intron 3 retention.</text>
</comment>
<comment type="similarity">
    <text evidence="24">Belongs to the sodium channel auxiliary subunit SCN1B (TC 8.A.17) family.</text>
</comment>
<keyword id="KW-0002">3D-structure</keyword>
<keyword id="KW-0025">Alternative splicing</keyword>
<keyword id="KW-1020">Atrial fibrillation</keyword>
<keyword id="KW-0992">Brugada syndrome</keyword>
<keyword id="KW-0130">Cell adhesion</keyword>
<keyword id="KW-1003">Cell membrane</keyword>
<keyword id="KW-0966">Cell projection</keyword>
<keyword id="KW-0225">Disease variant</keyword>
<keyword id="KW-1015">Disulfide bond</keyword>
<keyword id="KW-0887">Epilepsy</keyword>
<keyword id="KW-0325">Glycoprotein</keyword>
<keyword id="KW-0393">Immunoglobulin domain</keyword>
<keyword id="KW-0406">Ion transport</keyword>
<keyword id="KW-0472">Membrane</keyword>
<keyword id="KW-1267">Proteomics identification</keyword>
<keyword id="KW-1185">Reference proteome</keyword>
<keyword id="KW-0964">Secreted</keyword>
<keyword id="KW-0732">Signal</keyword>
<keyword id="KW-0915">Sodium</keyword>
<keyword id="KW-0739">Sodium transport</keyword>
<keyword id="KW-0812">Transmembrane</keyword>
<keyword id="KW-1133">Transmembrane helix</keyword>
<keyword id="KW-0813">Transport</keyword>
<gene>
    <name evidence="28" type="primary">SCN1B</name>
</gene>
<proteinExistence type="evidence at protein level"/>
<dbReference type="EMBL" id="L10338">
    <property type="protein sequence ID" value="AAA60391.1"/>
    <property type="molecule type" value="mRNA"/>
</dbReference>
<dbReference type="EMBL" id="L16242">
    <property type="protein sequence ID" value="AAA61277.1"/>
    <property type="molecule type" value="mRNA"/>
</dbReference>
<dbReference type="EMBL" id="U12193">
    <property type="protein sequence ID" value="AAB97608.1"/>
    <property type="molecule type" value="Genomic_DNA"/>
</dbReference>
<dbReference type="EMBL" id="U12189">
    <property type="protein sequence ID" value="AAB97608.1"/>
    <property type="status" value="JOINED"/>
    <property type="molecule type" value="Genomic_DNA"/>
</dbReference>
<dbReference type="EMBL" id="U12190">
    <property type="protein sequence ID" value="AAB97608.1"/>
    <property type="status" value="JOINED"/>
    <property type="molecule type" value="Genomic_DNA"/>
</dbReference>
<dbReference type="EMBL" id="U12191">
    <property type="protein sequence ID" value="AAB97608.1"/>
    <property type="status" value="JOINED"/>
    <property type="molecule type" value="Genomic_DNA"/>
</dbReference>
<dbReference type="EMBL" id="U12192">
    <property type="protein sequence ID" value="AAB97608.1"/>
    <property type="status" value="JOINED"/>
    <property type="molecule type" value="Genomic_DNA"/>
</dbReference>
<dbReference type="EMBL" id="AY391842">
    <property type="protein sequence ID" value="AAR25552.1"/>
    <property type="molecule type" value="mRNA"/>
</dbReference>
<dbReference type="EMBL" id="AK313279">
    <property type="protein sequence ID" value="BAG36087.1"/>
    <property type="molecule type" value="mRNA"/>
</dbReference>
<dbReference type="EMBL" id="DQ677665">
    <property type="protein sequence ID" value="ABQ01236.1"/>
    <property type="molecule type" value="Genomic_DNA"/>
</dbReference>
<dbReference type="EMBL" id="BT019923">
    <property type="protein sequence ID" value="AAV38726.1"/>
    <property type="molecule type" value="mRNA"/>
</dbReference>
<dbReference type="EMBL" id="AC020907">
    <property type="status" value="NOT_ANNOTATED_CDS"/>
    <property type="molecule type" value="Genomic_DNA"/>
</dbReference>
<dbReference type="EMBL" id="BC067122">
    <property type="protein sequence ID" value="AAH67122.1"/>
    <property type="molecule type" value="mRNA"/>
</dbReference>
<dbReference type="CCDS" id="CCDS12441.1">
    <molecule id="Q07699-1"/>
</dbReference>
<dbReference type="CCDS" id="CCDS46047.1">
    <molecule id="Q07699-2"/>
</dbReference>
<dbReference type="PIR" id="A55734">
    <property type="entry name" value="A55734"/>
</dbReference>
<dbReference type="RefSeq" id="NP_001028.1">
    <molecule id="Q07699-1"/>
    <property type="nucleotide sequence ID" value="NM_001037.5"/>
</dbReference>
<dbReference type="RefSeq" id="NP_001308534.1">
    <property type="nucleotide sequence ID" value="NM_001321605.1"/>
</dbReference>
<dbReference type="RefSeq" id="NP_950238.1">
    <molecule id="Q07699-2"/>
    <property type="nucleotide sequence ID" value="NM_199037.5"/>
</dbReference>
<dbReference type="PDB" id="6AGF">
    <property type="method" value="EM"/>
    <property type="resolution" value="3.20 A"/>
    <property type="chains" value="B=1-218"/>
</dbReference>
<dbReference type="PDB" id="6J8G">
    <property type="method" value="EM"/>
    <property type="resolution" value="3.20 A"/>
    <property type="chains" value="B=1-218"/>
</dbReference>
<dbReference type="PDB" id="6J8H">
    <property type="method" value="EM"/>
    <property type="resolution" value="3.20 A"/>
    <property type="chains" value="B=1-218"/>
</dbReference>
<dbReference type="PDB" id="6J8I">
    <property type="method" value="EM"/>
    <property type="resolution" value="3.20 A"/>
    <property type="chains" value="B=1-218"/>
</dbReference>
<dbReference type="PDB" id="6J8J">
    <property type="method" value="EM"/>
    <property type="resolution" value="3.20 A"/>
    <property type="chains" value="B=1-218"/>
</dbReference>
<dbReference type="PDB" id="7W77">
    <property type="method" value="EM"/>
    <property type="resolution" value="3.30 A"/>
    <property type="chains" value="B=1-218"/>
</dbReference>
<dbReference type="PDB" id="7W7F">
    <property type="method" value="EM"/>
    <property type="resolution" value="3.35 A"/>
    <property type="chains" value="B=1-218"/>
</dbReference>
<dbReference type="PDB" id="7W9K">
    <property type="method" value="EM"/>
    <property type="resolution" value="2.20 A"/>
    <property type="chains" value="B=1-218"/>
</dbReference>
<dbReference type="PDB" id="7W9L">
    <property type="method" value="EM"/>
    <property type="resolution" value="3.50 A"/>
    <property type="chains" value="B=1-218"/>
</dbReference>
<dbReference type="PDB" id="7W9M">
    <property type="method" value="EM"/>
    <property type="resolution" value="3.00 A"/>
    <property type="chains" value="B=1-218"/>
</dbReference>
<dbReference type="PDB" id="7W9P">
    <property type="method" value="EM"/>
    <property type="resolution" value="2.90 A"/>
    <property type="chains" value="B=1-218"/>
</dbReference>
<dbReference type="PDB" id="7W9T">
    <property type="method" value="EM"/>
    <property type="resolution" value="3.00 A"/>
    <property type="chains" value="B=1-218"/>
</dbReference>
<dbReference type="PDB" id="7XM9">
    <property type="method" value="EM"/>
    <property type="resolution" value="3.22 A"/>
    <property type="chains" value="B=1-218"/>
</dbReference>
<dbReference type="PDB" id="7XMF">
    <property type="method" value="EM"/>
    <property type="resolution" value="3.07 A"/>
    <property type="chains" value="B=1-218"/>
</dbReference>
<dbReference type="PDB" id="7XMG">
    <property type="method" value="EM"/>
    <property type="resolution" value="3.09 A"/>
    <property type="chains" value="B=1-218"/>
</dbReference>
<dbReference type="PDB" id="7XVE">
    <property type="method" value="EM"/>
    <property type="resolution" value="2.70 A"/>
    <property type="chains" value="B=1-218"/>
</dbReference>
<dbReference type="PDB" id="7XVF">
    <property type="method" value="EM"/>
    <property type="resolution" value="2.80 A"/>
    <property type="chains" value="B=1-218"/>
</dbReference>
<dbReference type="PDB" id="8FHD">
    <property type="method" value="EM"/>
    <property type="resolution" value="3.10 A"/>
    <property type="chains" value="C=1-218"/>
</dbReference>
<dbReference type="PDB" id="8G1A">
    <property type="method" value="EM"/>
    <property type="resolution" value="2.80 A"/>
    <property type="chains" value="B=1-218"/>
</dbReference>
<dbReference type="PDB" id="8GZ1">
    <property type="method" value="EM"/>
    <property type="resolution" value="3.40 A"/>
    <property type="chains" value="D=1-218"/>
</dbReference>
<dbReference type="PDB" id="8GZ2">
    <property type="method" value="EM"/>
    <property type="resolution" value="3.30 A"/>
    <property type="chains" value="D=1-218"/>
</dbReference>
<dbReference type="PDB" id="8I5B">
    <property type="method" value="EM"/>
    <property type="resolution" value="2.70 A"/>
    <property type="chains" value="B=1-218"/>
</dbReference>
<dbReference type="PDB" id="8I5G">
    <property type="method" value="EM"/>
    <property type="resolution" value="2.70 A"/>
    <property type="chains" value="B=1-192"/>
</dbReference>
<dbReference type="PDB" id="8I5X">
    <property type="method" value="EM"/>
    <property type="resolution" value="2.90 A"/>
    <property type="chains" value="B=1-218"/>
</dbReference>
<dbReference type="PDB" id="8I5Y">
    <property type="method" value="EM"/>
    <property type="resolution" value="2.60 A"/>
    <property type="chains" value="B=1-218"/>
</dbReference>
<dbReference type="PDB" id="8J4F">
    <property type="method" value="EM"/>
    <property type="resolution" value="3.00 A"/>
    <property type="chains" value="B=1-218"/>
</dbReference>
<dbReference type="PDB" id="8S9B">
    <property type="method" value="EM"/>
    <property type="resolution" value="2.90 A"/>
    <property type="chains" value="B=1-218"/>
</dbReference>
<dbReference type="PDB" id="8S9C">
    <property type="method" value="EM"/>
    <property type="resolution" value="3.20 A"/>
    <property type="chains" value="B=1-218"/>
</dbReference>
<dbReference type="PDB" id="8THG">
    <property type="method" value="EM"/>
    <property type="resolution" value="2.90 A"/>
    <property type="chains" value="B=1-218"/>
</dbReference>
<dbReference type="PDB" id="8THH">
    <property type="method" value="EM"/>
    <property type="resolution" value="2.70 A"/>
    <property type="chains" value="B=1-218"/>
</dbReference>
<dbReference type="PDB" id="8XMM">
    <property type="method" value="EM"/>
    <property type="resolution" value="2.89 A"/>
    <property type="chains" value="B=1-218"/>
</dbReference>
<dbReference type="PDB" id="8XMN">
    <property type="method" value="EM"/>
    <property type="resolution" value="3.37 A"/>
    <property type="chains" value="B=1-218"/>
</dbReference>
<dbReference type="PDB" id="8XMO">
    <property type="method" value="EM"/>
    <property type="resolution" value="3.39 A"/>
    <property type="chains" value="B=1-218"/>
</dbReference>
<dbReference type="PDBsum" id="6AGF"/>
<dbReference type="PDBsum" id="6J8G"/>
<dbReference type="PDBsum" id="6J8H"/>
<dbReference type="PDBsum" id="6J8I"/>
<dbReference type="PDBsum" id="6J8J"/>
<dbReference type="PDBsum" id="7W77"/>
<dbReference type="PDBsum" id="7W7F"/>
<dbReference type="PDBsum" id="7W9K"/>
<dbReference type="PDBsum" id="7W9L"/>
<dbReference type="PDBsum" id="7W9M"/>
<dbReference type="PDBsum" id="7W9P"/>
<dbReference type="PDBsum" id="7W9T"/>
<dbReference type="PDBsum" id="7XM9"/>
<dbReference type="PDBsum" id="7XMF"/>
<dbReference type="PDBsum" id="7XMG"/>
<dbReference type="PDBsum" id="7XVE"/>
<dbReference type="PDBsum" id="7XVF"/>
<dbReference type="PDBsum" id="8FHD"/>
<dbReference type="PDBsum" id="8G1A"/>
<dbReference type="PDBsum" id="8GZ1"/>
<dbReference type="PDBsum" id="8GZ2"/>
<dbReference type="PDBsum" id="8I5B"/>
<dbReference type="PDBsum" id="8I5G"/>
<dbReference type="PDBsum" id="8I5X"/>
<dbReference type="PDBsum" id="8I5Y"/>
<dbReference type="PDBsum" id="8J4F"/>
<dbReference type="PDBsum" id="8S9B"/>
<dbReference type="PDBsum" id="8S9C"/>
<dbReference type="PDBsum" id="8THG"/>
<dbReference type="PDBsum" id="8THH"/>
<dbReference type="PDBsum" id="8XMM"/>
<dbReference type="PDBsum" id="8XMN"/>
<dbReference type="PDBsum" id="8XMO"/>
<dbReference type="EMDB" id="EMD-29082"/>
<dbReference type="EMDB" id="EMD-29665"/>
<dbReference type="EMDB" id="EMD-32341"/>
<dbReference type="EMDB" id="EMD-32343"/>
<dbReference type="EMDB" id="EMD-32368"/>
<dbReference type="EMDB" id="EMD-32369"/>
<dbReference type="EMDB" id="EMD-32370"/>
<dbReference type="EMDB" id="EMD-32371"/>
<dbReference type="EMDB" id="EMD-32372"/>
<dbReference type="EMDB" id="EMD-33292"/>
<dbReference type="EMDB" id="EMD-33295"/>
<dbReference type="EMDB" id="EMD-33296"/>
<dbReference type="EMDB" id="EMD-33484"/>
<dbReference type="EMDB" id="EMD-33485"/>
<dbReference type="EMDB" id="EMD-34387"/>
<dbReference type="EMDB" id="EMD-34388"/>
<dbReference type="EMDB" id="EMD-35193"/>
<dbReference type="EMDB" id="EMD-35194"/>
<dbReference type="EMDB" id="EMD-35197"/>
<dbReference type="EMDB" id="EMD-35198"/>
<dbReference type="EMDB" id="EMD-35975"/>
<dbReference type="EMDB" id="EMD-38482"/>
<dbReference type="EMDB" id="EMD-38483"/>
<dbReference type="EMDB" id="EMD-38484"/>
<dbReference type="EMDB" id="EMD-40238"/>
<dbReference type="EMDB" id="EMD-40239"/>
<dbReference type="EMDB" id="EMD-41261"/>
<dbReference type="EMDB" id="EMD-41262"/>
<dbReference type="EMDB" id="EMD-9617"/>
<dbReference type="EMDB" id="EMD-9781"/>
<dbReference type="EMDB" id="EMD-9782"/>
<dbReference type="SMR" id="Q07699"/>
<dbReference type="BioGRID" id="112229">
    <property type="interactions" value="16"/>
</dbReference>
<dbReference type="ComplexPortal" id="CPX-8639">
    <property type="entry name" value="Nav1.1 voltage-gated sodium channel complex, SCN1B-SCN2B variant"/>
</dbReference>
<dbReference type="ComplexPortal" id="CPX-8641">
    <property type="entry name" value="Nav1.1 voltage-gated sodium channel complex, SCN1B-SCN4B variant"/>
</dbReference>
<dbReference type="ComplexPortal" id="CPX-8643">
    <property type="entry name" value="Nav1.2 voltage-gated sodium channel complex, SCN1B-SCN2B variant"/>
</dbReference>
<dbReference type="ComplexPortal" id="CPX-8645">
    <property type="entry name" value="Nav1.2 voltage-gated sodium channel complex, SCN1B-SCN4B variant"/>
</dbReference>
<dbReference type="ComplexPortal" id="CPX-8661">
    <property type="entry name" value="Nav1.3 voltage-gated sodium channel complex, SCN1B-SCN2B variant"/>
</dbReference>
<dbReference type="ComplexPortal" id="CPX-8664">
    <property type="entry name" value="Nav1.3 voltage-gated sodium channel complex, SCN1B-SCN4B variant"/>
</dbReference>
<dbReference type="ComplexPortal" id="CPX-8665">
    <property type="entry name" value="Nav1.4 voltage-gated sodium channel complex, SCN1B-SCN2B variant"/>
</dbReference>
<dbReference type="ComplexPortal" id="CPX-8666">
    <property type="entry name" value="Nav1.4 voltage-gated sodium channel complex, SCN1B-SCN4B variant"/>
</dbReference>
<dbReference type="ComplexPortal" id="CPX-8669">
    <property type="entry name" value="Nav1.5 voltage-gated sodium channel complex, SCN1B-SCN2B variant"/>
</dbReference>
<dbReference type="ComplexPortal" id="CPX-8670">
    <property type="entry name" value="Nav1.5 voltage-gated sodium channel complex, SCN1B-SCN4B variant"/>
</dbReference>
<dbReference type="ComplexPortal" id="CPX-8673">
    <property type="entry name" value="Nav1.6 voltage-gated sodium channel complex, SCN1B-SCN2B variant"/>
</dbReference>
<dbReference type="ComplexPortal" id="CPX-8674">
    <property type="entry name" value="Nav1.6 voltage-gated sodium channel complex, SCN1B-SCN4B variant"/>
</dbReference>
<dbReference type="ComplexPortal" id="CPX-8677">
    <property type="entry name" value="Nav1.7 voltage-gated sodium channel complex, SCN1B-SCN2B variant"/>
</dbReference>
<dbReference type="ComplexPortal" id="CPX-8678">
    <property type="entry name" value="Nav1.7 voltage-gated sodium channel complex, SCN1B-SCN4B variant"/>
</dbReference>
<dbReference type="ComplexPortal" id="CPX-8681">
    <property type="entry name" value="Nav1.8 voltage-gated sodium channel complex, SCN1B-SCN2B variant"/>
</dbReference>
<dbReference type="ComplexPortal" id="CPX-8682">
    <property type="entry name" value="Nav1.8 voltage-gated sodium channel complex, SCN1B-SCN4B variant"/>
</dbReference>
<dbReference type="ComplexPortal" id="CPX-8685">
    <property type="entry name" value="Nav1.9 voltage-gated sodium channel complex, SCN1B-SCN2B variant"/>
</dbReference>
<dbReference type="ComplexPortal" id="CPX-8686">
    <property type="entry name" value="Nav1.9 voltage-gated sodium channel complex, SCN1B-SCN4B variant"/>
</dbReference>
<dbReference type="ComplexPortal" id="CPX-8693">
    <property type="entry name" value="Nax cation channel complex, SCN1B-SCN4B variant"/>
</dbReference>
<dbReference type="ComplexPortal" id="CPX-8694">
    <property type="entry name" value="Nax cation channel complex, SCN1B-SCN2B variant"/>
</dbReference>
<dbReference type="CORUM" id="Q07699"/>
<dbReference type="FunCoup" id="Q07699">
    <property type="interactions" value="520"/>
</dbReference>
<dbReference type="IntAct" id="Q07699">
    <property type="interactions" value="11"/>
</dbReference>
<dbReference type="MINT" id="Q07699"/>
<dbReference type="STRING" id="9606.ENSP00000396915"/>
<dbReference type="BindingDB" id="Q07699"/>
<dbReference type="ChEMBL" id="CHEMBL5487"/>
<dbReference type="DrugBank" id="DB05541">
    <property type="generic name" value="Brivaracetam"/>
</dbReference>
<dbReference type="DrugBank" id="DB00907">
    <property type="generic name" value="Cocaine"/>
</dbReference>
<dbReference type="DrugBank" id="DB13269">
    <property type="generic name" value="Dichlorobenzyl alcohol"/>
</dbReference>
<dbReference type="DrugBank" id="DB13961">
    <property type="generic name" value="Fish oil"/>
</dbReference>
<dbReference type="DrugBank" id="DB00776">
    <property type="generic name" value="Oxcarbazepine"/>
</dbReference>
<dbReference type="DrugBank" id="DB00252">
    <property type="generic name" value="Phenytoin"/>
</dbReference>
<dbReference type="DrugBank" id="DB00243">
    <property type="generic name" value="Ranolazine"/>
</dbReference>
<dbReference type="DrugBank" id="DB00313">
    <property type="generic name" value="Valproic acid"/>
</dbReference>
<dbReference type="DrugBank" id="DB00909">
    <property type="generic name" value="Zonisamide"/>
</dbReference>
<dbReference type="DrugCentral" id="Q07699"/>
<dbReference type="TCDB" id="8.A.17.1.4">
    <property type="family name" value="the na(+) channel auxiliary subunit Beta1-Beta4 (sca-Beta) family"/>
</dbReference>
<dbReference type="GlyCosmos" id="Q07699">
    <property type="glycosylation" value="4 sites, No reported glycans"/>
</dbReference>
<dbReference type="GlyGen" id="Q07699">
    <property type="glycosylation" value="4 sites"/>
</dbReference>
<dbReference type="iPTMnet" id="Q07699"/>
<dbReference type="PhosphoSitePlus" id="Q07699"/>
<dbReference type="BioMuta" id="SCN1B"/>
<dbReference type="DMDM" id="1705868"/>
<dbReference type="MassIVE" id="Q07699"/>
<dbReference type="PaxDb" id="9606-ENSP00000396915"/>
<dbReference type="PeptideAtlas" id="Q07699"/>
<dbReference type="ProteomicsDB" id="58527">
    <molecule id="Q07699-1"/>
</dbReference>
<dbReference type="ProteomicsDB" id="58528">
    <molecule id="Q07699-2"/>
</dbReference>
<dbReference type="Antibodypedia" id="29258">
    <property type="antibodies" value="207 antibodies from 29 providers"/>
</dbReference>
<dbReference type="DNASU" id="6324"/>
<dbReference type="Ensembl" id="ENST00000262631.11">
    <molecule id="Q07699-1"/>
    <property type="protein sequence ID" value="ENSP00000262631.3"/>
    <property type="gene ID" value="ENSG00000105711.14"/>
</dbReference>
<dbReference type="Ensembl" id="ENST00000415950.5">
    <molecule id="Q07699-2"/>
    <property type="protein sequence ID" value="ENSP00000396915.2"/>
    <property type="gene ID" value="ENSG00000105711.14"/>
</dbReference>
<dbReference type="Ensembl" id="ENST00000638536.1">
    <molecule id="Q07699-1"/>
    <property type="protein sequence ID" value="ENSP00000492022.1"/>
    <property type="gene ID" value="ENSG00000105711.14"/>
</dbReference>
<dbReference type="GeneID" id="6324"/>
<dbReference type="KEGG" id="hsa:6324"/>
<dbReference type="MANE-Select" id="ENST00000262631.11">
    <property type="protein sequence ID" value="ENSP00000262631.3"/>
    <property type="RefSeq nucleotide sequence ID" value="NM_001037.5"/>
    <property type="RefSeq protein sequence ID" value="NP_001028.1"/>
</dbReference>
<dbReference type="UCSC" id="uc002nxo.3">
    <molecule id="Q07699-1"/>
    <property type="organism name" value="human"/>
</dbReference>
<dbReference type="AGR" id="HGNC:10586"/>
<dbReference type="CTD" id="6324"/>
<dbReference type="DisGeNET" id="6324"/>
<dbReference type="GeneCards" id="SCN1B"/>
<dbReference type="GeneReviews" id="SCN1B"/>
<dbReference type="HGNC" id="HGNC:10586">
    <property type="gene designation" value="SCN1B"/>
</dbReference>
<dbReference type="HPA" id="ENSG00000105711">
    <property type="expression patterns" value="Tissue enhanced (brain, skeletal muscle, tongue)"/>
</dbReference>
<dbReference type="MalaCards" id="SCN1B"/>
<dbReference type="MIM" id="600235">
    <property type="type" value="gene"/>
</dbReference>
<dbReference type="MIM" id="604233">
    <property type="type" value="phenotype"/>
</dbReference>
<dbReference type="MIM" id="612838">
    <property type="type" value="phenotype"/>
</dbReference>
<dbReference type="MIM" id="615377">
    <property type="type" value="phenotype"/>
</dbReference>
<dbReference type="MIM" id="617350">
    <property type="type" value="phenotype"/>
</dbReference>
<dbReference type="neXtProt" id="NX_Q07699"/>
<dbReference type="OpenTargets" id="ENSG00000105711"/>
<dbReference type="Orphanet" id="130">
    <property type="disease" value="Brugada syndrome"/>
</dbReference>
<dbReference type="Orphanet" id="33069">
    <property type="disease" value="Dravet syndrome"/>
</dbReference>
<dbReference type="Orphanet" id="1934">
    <property type="disease" value="Early infantile developmental and epileptic encephalopathy"/>
</dbReference>
<dbReference type="Orphanet" id="334">
    <property type="disease" value="Familial atrial fibrillation"/>
</dbReference>
<dbReference type="Orphanet" id="871">
    <property type="disease" value="Familial progressive cardiac conduction defect"/>
</dbReference>
<dbReference type="Orphanet" id="36387">
    <property type="disease" value="Genetic epilepsy with febrile seizure plus"/>
</dbReference>
<dbReference type="PharmGKB" id="PA302"/>
<dbReference type="VEuPathDB" id="HostDB:ENSG00000105711"/>
<dbReference type="eggNOG" id="ENOG502R0UM">
    <property type="taxonomic scope" value="Eukaryota"/>
</dbReference>
<dbReference type="GeneTree" id="ENSGT00390000018560"/>
<dbReference type="HOGENOM" id="CLU_096296_0_0_1"/>
<dbReference type="InParanoid" id="Q07699"/>
<dbReference type="OMA" id="VWGGCVE"/>
<dbReference type="OrthoDB" id="8868224at2759"/>
<dbReference type="PAN-GO" id="Q07699">
    <property type="GO annotations" value="6 GO annotations based on evolutionary models"/>
</dbReference>
<dbReference type="PhylomeDB" id="Q07699"/>
<dbReference type="TreeFam" id="TF332097"/>
<dbReference type="PathwayCommons" id="Q07699"/>
<dbReference type="Reactome" id="R-HSA-445095">
    <property type="pathway name" value="Interaction between L1 and Ankyrins"/>
</dbReference>
<dbReference type="Reactome" id="R-HSA-5576892">
    <property type="pathway name" value="Phase 0 - rapid depolarisation"/>
</dbReference>
<dbReference type="Reactome" id="R-HSA-9717207">
    <property type="pathway name" value="Sensory perception of sweet, bitter, and umami (glutamate) taste"/>
</dbReference>
<dbReference type="SignaLink" id="Q07699"/>
<dbReference type="BioGRID-ORCS" id="6324">
    <property type="hits" value="15 hits in 1166 CRISPR screens"/>
</dbReference>
<dbReference type="GeneWiki" id="SCN1B"/>
<dbReference type="GenomeRNAi" id="6324"/>
<dbReference type="Pharos" id="Q07699">
    <property type="development level" value="Tbio"/>
</dbReference>
<dbReference type="PRO" id="PR:Q07699"/>
<dbReference type="Proteomes" id="UP000005640">
    <property type="component" value="Chromosome 19"/>
</dbReference>
<dbReference type="RNAct" id="Q07699">
    <property type="molecule type" value="protein"/>
</dbReference>
<dbReference type="Bgee" id="ENSG00000105711">
    <property type="expression patterns" value="Expressed in primary visual cortex and 96 other cell types or tissues"/>
</dbReference>
<dbReference type="ExpressionAtlas" id="Q07699">
    <property type="expression patterns" value="baseline and differential"/>
</dbReference>
<dbReference type="GO" id="GO:0005576">
    <property type="term" value="C:extracellular region"/>
    <property type="evidence" value="ECO:0007669"/>
    <property type="project" value="UniProtKB-SubCell"/>
</dbReference>
<dbReference type="GO" id="GO:0014704">
    <property type="term" value="C:intercalated disc"/>
    <property type="evidence" value="ECO:0000250"/>
    <property type="project" value="BHF-UCL"/>
</dbReference>
<dbReference type="GO" id="GO:0033268">
    <property type="term" value="C:node of Ranvier"/>
    <property type="evidence" value="ECO:0000250"/>
    <property type="project" value="BHF-UCL"/>
</dbReference>
<dbReference type="GO" id="GO:0043204">
    <property type="term" value="C:perikaryon"/>
    <property type="evidence" value="ECO:0007669"/>
    <property type="project" value="UniProtKB-SubCell"/>
</dbReference>
<dbReference type="GO" id="GO:0005886">
    <property type="term" value="C:plasma membrane"/>
    <property type="evidence" value="ECO:0000314"/>
    <property type="project" value="UniProtKB"/>
</dbReference>
<dbReference type="GO" id="GO:0030315">
    <property type="term" value="C:T-tubule"/>
    <property type="evidence" value="ECO:0000250"/>
    <property type="project" value="BHF-UCL"/>
</dbReference>
<dbReference type="GO" id="GO:0001518">
    <property type="term" value="C:voltage-gated sodium channel complex"/>
    <property type="evidence" value="ECO:0000314"/>
    <property type="project" value="UniProtKB"/>
</dbReference>
<dbReference type="GO" id="GO:0019871">
    <property type="term" value="F:sodium channel inhibitor activity"/>
    <property type="evidence" value="ECO:0000250"/>
    <property type="project" value="BHF-UCL"/>
</dbReference>
<dbReference type="GO" id="GO:0017080">
    <property type="term" value="F:sodium channel regulator activity"/>
    <property type="evidence" value="ECO:0000314"/>
    <property type="project" value="UniProtKB"/>
</dbReference>
<dbReference type="GO" id="GO:0044325">
    <property type="term" value="F:transmembrane transporter binding"/>
    <property type="evidence" value="ECO:0000318"/>
    <property type="project" value="GO_Central"/>
</dbReference>
<dbReference type="GO" id="GO:0007411">
    <property type="term" value="P:axon guidance"/>
    <property type="evidence" value="ECO:0000250"/>
    <property type="project" value="BHF-UCL"/>
</dbReference>
<dbReference type="GO" id="GO:0061337">
    <property type="term" value="P:cardiac conduction"/>
    <property type="evidence" value="ECO:0000250"/>
    <property type="project" value="BHF-UCL"/>
</dbReference>
<dbReference type="GO" id="GO:0086002">
    <property type="term" value="P:cardiac muscle cell action potential involved in contraction"/>
    <property type="evidence" value="ECO:0000315"/>
    <property type="project" value="BHF-UCL"/>
</dbReference>
<dbReference type="GO" id="GO:0060048">
    <property type="term" value="P:cardiac muscle contraction"/>
    <property type="evidence" value="ECO:0000315"/>
    <property type="project" value="BHF-UCL"/>
</dbReference>
<dbReference type="GO" id="GO:0007155">
    <property type="term" value="P:cell adhesion"/>
    <property type="evidence" value="ECO:0007669"/>
    <property type="project" value="UniProtKB-KW"/>
</dbReference>
<dbReference type="GO" id="GO:0021966">
    <property type="term" value="P:corticospinal neuron axon guidance"/>
    <property type="evidence" value="ECO:0000250"/>
    <property type="project" value="BHF-UCL"/>
</dbReference>
<dbReference type="GO" id="GO:0040011">
    <property type="term" value="P:locomotion"/>
    <property type="evidence" value="ECO:0000250"/>
    <property type="project" value="BHF-UCL"/>
</dbReference>
<dbReference type="GO" id="GO:0051899">
    <property type="term" value="P:membrane depolarization"/>
    <property type="evidence" value="ECO:0000314"/>
    <property type="project" value="BHF-UCL"/>
</dbReference>
<dbReference type="GO" id="GO:0086010">
    <property type="term" value="P:membrane depolarization during action potential"/>
    <property type="evidence" value="ECO:0000314"/>
    <property type="project" value="UniProtKB"/>
</dbReference>
<dbReference type="GO" id="GO:0086012">
    <property type="term" value="P:membrane depolarization during cardiac muscle cell action potential"/>
    <property type="evidence" value="ECO:0000315"/>
    <property type="project" value="BHF-UCL"/>
</dbReference>
<dbReference type="GO" id="GO:0086047">
    <property type="term" value="P:membrane depolarization during Purkinje myocyte cell action potential"/>
    <property type="evidence" value="ECO:0000315"/>
    <property type="project" value="BHF-UCL"/>
</dbReference>
<dbReference type="GO" id="GO:0019227">
    <property type="term" value="P:neuronal action potential propagation"/>
    <property type="evidence" value="ECO:0000250"/>
    <property type="project" value="BHF-UCL"/>
</dbReference>
<dbReference type="GO" id="GO:0010976">
    <property type="term" value="P:positive regulation of neuron projection development"/>
    <property type="evidence" value="ECO:0000250"/>
    <property type="project" value="BHF-UCL"/>
</dbReference>
<dbReference type="GO" id="GO:0010765">
    <property type="term" value="P:positive regulation of sodium ion transport"/>
    <property type="evidence" value="ECO:0000314"/>
    <property type="project" value="BHF-UCL"/>
</dbReference>
<dbReference type="GO" id="GO:1905152">
    <property type="term" value="P:positive regulation of voltage-gated sodium channel activity"/>
    <property type="evidence" value="ECO:0000314"/>
    <property type="project" value="UniProtKB"/>
</dbReference>
<dbReference type="GO" id="GO:0060371">
    <property type="term" value="P:regulation of atrial cardiac muscle cell membrane depolarization"/>
    <property type="evidence" value="ECO:0000315"/>
    <property type="project" value="BHF-UCL"/>
</dbReference>
<dbReference type="GO" id="GO:0086091">
    <property type="term" value="P:regulation of heart rate by cardiac conduction"/>
    <property type="evidence" value="ECO:0000315"/>
    <property type="project" value="BHF-UCL"/>
</dbReference>
<dbReference type="GO" id="GO:1902305">
    <property type="term" value="P:regulation of sodium ion transmembrane transport"/>
    <property type="evidence" value="ECO:0000314"/>
    <property type="project" value="BHF-UCL"/>
</dbReference>
<dbReference type="GO" id="GO:0060307">
    <property type="term" value="P:regulation of ventricular cardiac muscle cell membrane repolarization"/>
    <property type="evidence" value="ECO:0000250"/>
    <property type="project" value="BHF-UCL"/>
</dbReference>
<dbReference type="GO" id="GO:0035725">
    <property type="term" value="P:sodium ion transmembrane transport"/>
    <property type="evidence" value="ECO:0000314"/>
    <property type="project" value="BHF-UCL"/>
</dbReference>
<dbReference type="FunFam" id="2.60.40.10:FF:000581">
    <property type="entry name" value="sodium channel subunit beta-1"/>
    <property type="match status" value="1"/>
</dbReference>
<dbReference type="Gene3D" id="2.60.40.10">
    <property type="entry name" value="Immunoglobulins"/>
    <property type="match status" value="1"/>
</dbReference>
<dbReference type="InterPro" id="IPR036179">
    <property type="entry name" value="Ig-like_dom_sf"/>
</dbReference>
<dbReference type="InterPro" id="IPR013783">
    <property type="entry name" value="Ig-like_fold"/>
</dbReference>
<dbReference type="InterPro" id="IPR013106">
    <property type="entry name" value="Ig_V-set"/>
</dbReference>
<dbReference type="InterPro" id="IPR027098">
    <property type="entry name" value="Na_channel_b1/b3"/>
</dbReference>
<dbReference type="PANTHER" id="PTHR10546:SF2">
    <property type="entry name" value="SODIUM CHANNEL SUBUNIT BETA-1"/>
    <property type="match status" value="1"/>
</dbReference>
<dbReference type="PANTHER" id="PTHR10546">
    <property type="entry name" value="SODIUM CHANNEL SUBUNIT BETA-1 AND 3"/>
    <property type="match status" value="1"/>
</dbReference>
<dbReference type="Pfam" id="PF07686">
    <property type="entry name" value="V-set"/>
    <property type="match status" value="1"/>
</dbReference>
<dbReference type="SUPFAM" id="SSF48726">
    <property type="entry name" value="Immunoglobulin"/>
    <property type="match status" value="1"/>
</dbReference>
<organism>
    <name type="scientific">Homo sapiens</name>
    <name type="common">Human</name>
    <dbReference type="NCBI Taxonomy" id="9606"/>
    <lineage>
        <taxon>Eukaryota</taxon>
        <taxon>Metazoa</taxon>
        <taxon>Chordata</taxon>
        <taxon>Craniata</taxon>
        <taxon>Vertebrata</taxon>
        <taxon>Euteleostomi</taxon>
        <taxon>Mammalia</taxon>
        <taxon>Eutheria</taxon>
        <taxon>Euarchontoglires</taxon>
        <taxon>Primates</taxon>
        <taxon>Haplorrhini</taxon>
        <taxon>Catarrhini</taxon>
        <taxon>Hominidae</taxon>
        <taxon>Homo</taxon>
    </lineage>
</organism>
<name>SCN1B_HUMAN</name>